<accession>A1RVA1</accession>
<dbReference type="EMBL" id="CP000504">
    <property type="protein sequence ID" value="ABL88883.1"/>
    <property type="status" value="ALT_INIT"/>
    <property type="molecule type" value="Genomic_DNA"/>
</dbReference>
<dbReference type="RefSeq" id="WP_053240571.1">
    <property type="nucleotide sequence ID" value="NC_008701.1"/>
</dbReference>
<dbReference type="SMR" id="A1RVA1"/>
<dbReference type="STRING" id="384616.Pisl_1732"/>
<dbReference type="GeneID" id="4618131"/>
<dbReference type="KEGG" id="pis:Pisl_1732"/>
<dbReference type="eggNOG" id="arCOG04098">
    <property type="taxonomic scope" value="Archaea"/>
</dbReference>
<dbReference type="HOGENOM" id="CLU_083987_0_2_2"/>
<dbReference type="OrthoDB" id="314984at2157"/>
<dbReference type="Proteomes" id="UP000002595">
    <property type="component" value="Chromosome"/>
</dbReference>
<dbReference type="GO" id="GO:0022625">
    <property type="term" value="C:cytosolic large ribosomal subunit"/>
    <property type="evidence" value="ECO:0007669"/>
    <property type="project" value="TreeGrafter"/>
</dbReference>
<dbReference type="GO" id="GO:0019843">
    <property type="term" value="F:rRNA binding"/>
    <property type="evidence" value="ECO:0007669"/>
    <property type="project" value="UniProtKB-UniRule"/>
</dbReference>
<dbReference type="GO" id="GO:0003735">
    <property type="term" value="F:structural constituent of ribosome"/>
    <property type="evidence" value="ECO:0007669"/>
    <property type="project" value="InterPro"/>
</dbReference>
<dbReference type="GO" id="GO:0002181">
    <property type="term" value="P:cytoplasmic translation"/>
    <property type="evidence" value="ECO:0007669"/>
    <property type="project" value="TreeGrafter"/>
</dbReference>
<dbReference type="CDD" id="cd00336">
    <property type="entry name" value="Ribosomal_L22"/>
    <property type="match status" value="1"/>
</dbReference>
<dbReference type="Gene3D" id="3.90.470.10">
    <property type="entry name" value="Ribosomal protein L22/L17"/>
    <property type="match status" value="1"/>
</dbReference>
<dbReference type="HAMAP" id="MF_01331_A">
    <property type="entry name" value="Ribosomal_uL22_A"/>
    <property type="match status" value="1"/>
</dbReference>
<dbReference type="InterPro" id="IPR001063">
    <property type="entry name" value="Ribosomal_uL22"/>
</dbReference>
<dbReference type="InterPro" id="IPR005721">
    <property type="entry name" value="Ribosomal_uL22_euk/arc"/>
</dbReference>
<dbReference type="InterPro" id="IPR036394">
    <property type="entry name" value="Ribosomal_uL22_sf"/>
</dbReference>
<dbReference type="NCBIfam" id="NF003260">
    <property type="entry name" value="PRK04223.1"/>
    <property type="match status" value="1"/>
</dbReference>
<dbReference type="NCBIfam" id="TIGR01038">
    <property type="entry name" value="uL22_arch_euk"/>
    <property type="match status" value="1"/>
</dbReference>
<dbReference type="PANTHER" id="PTHR11593">
    <property type="entry name" value="60S RIBOSOMAL PROTEIN L17"/>
    <property type="match status" value="1"/>
</dbReference>
<dbReference type="PANTHER" id="PTHR11593:SF10">
    <property type="entry name" value="60S RIBOSOMAL PROTEIN L17"/>
    <property type="match status" value="1"/>
</dbReference>
<dbReference type="Pfam" id="PF00237">
    <property type="entry name" value="Ribosomal_L22"/>
    <property type="match status" value="1"/>
</dbReference>
<dbReference type="SUPFAM" id="SSF54843">
    <property type="entry name" value="Ribosomal protein L22"/>
    <property type="match status" value="1"/>
</dbReference>
<comment type="function">
    <text evidence="1">This protein binds specifically to 23S rRNA. It makes multiple contacts with different domains of the 23S rRNA in the assembled 50S subunit and ribosome.</text>
</comment>
<comment type="function">
    <text evidence="1">The globular domain of the protein is located near the polypeptide exit tunnel on the outside of the subunit, while an extended beta-hairpin is found that lines the wall of the exit tunnel in the center of the 70S ribosome.</text>
</comment>
<comment type="subunit">
    <text evidence="1">Part of the 50S ribosomal subunit.</text>
</comment>
<comment type="similarity">
    <text evidence="1">Belongs to the universal ribosomal protein uL22 family.</text>
</comment>
<comment type="sequence caution" evidence="2">
    <conflict type="erroneous initiation">
        <sequence resource="EMBL-CDS" id="ABL88883"/>
    </conflict>
    <text>Extended N-terminus.</text>
</comment>
<name>RL22_PYRIL</name>
<evidence type="ECO:0000255" key="1">
    <source>
        <dbReference type="HAMAP-Rule" id="MF_01331"/>
    </source>
</evidence>
<evidence type="ECO:0000305" key="2"/>
<gene>
    <name evidence="1" type="primary">rpl22</name>
    <name type="ordered locus">Pisl_1732</name>
</gene>
<organism>
    <name type="scientific">Pyrobaculum islandicum (strain DSM 4184 / JCM 9189 / GEO3)</name>
    <dbReference type="NCBI Taxonomy" id="384616"/>
    <lineage>
        <taxon>Archaea</taxon>
        <taxon>Thermoproteota</taxon>
        <taxon>Thermoprotei</taxon>
        <taxon>Thermoproteales</taxon>
        <taxon>Thermoproteaceae</taxon>
        <taxon>Pyrobaculum</taxon>
    </lineage>
</organism>
<protein>
    <recommendedName>
        <fullName evidence="1">Large ribosomal subunit protein uL22</fullName>
    </recommendedName>
    <alternativeName>
        <fullName evidence="2">50S ribosomal protein L22</fullName>
    </alternativeName>
</protein>
<proteinExistence type="inferred from homology"/>
<keyword id="KW-0687">Ribonucleoprotein</keyword>
<keyword id="KW-0689">Ribosomal protein</keyword>
<keyword id="KW-0694">RNA-binding</keyword>
<keyword id="KW-0699">rRNA-binding</keyword>
<reference key="1">
    <citation type="submission" date="2006-12" db="EMBL/GenBank/DDBJ databases">
        <title>Complete sequence of Pyrobaculum islandicum DSM 4184.</title>
        <authorList>
            <person name="Copeland A."/>
            <person name="Lucas S."/>
            <person name="Lapidus A."/>
            <person name="Barry K."/>
            <person name="Detter J.C."/>
            <person name="Glavina del Rio T."/>
            <person name="Dalin E."/>
            <person name="Tice H."/>
            <person name="Pitluck S."/>
            <person name="Meincke L."/>
            <person name="Brettin T."/>
            <person name="Bruce D."/>
            <person name="Han C."/>
            <person name="Tapia R."/>
            <person name="Gilna P."/>
            <person name="Schmutz J."/>
            <person name="Larimer F."/>
            <person name="Land M."/>
            <person name="Hauser L."/>
            <person name="Kyrpides N."/>
            <person name="Mikhailova N."/>
            <person name="Cozen A.E."/>
            <person name="Fitz-Gibbon S.T."/>
            <person name="House C.H."/>
            <person name="Saltikov C."/>
            <person name="Lowe T."/>
            <person name="Richardson P."/>
        </authorList>
    </citation>
    <scope>NUCLEOTIDE SEQUENCE [LARGE SCALE GENOMIC DNA]</scope>
    <source>
        <strain>DSM 4184 / JCM 9189 / GEO3</strain>
    </source>
</reference>
<feature type="chain" id="PRO_0000354548" description="Large ribosomal subunit protein uL22">
    <location>
        <begin position="1"/>
        <end position="185"/>
    </location>
</feature>
<sequence length="185" mass="21554">MPQHQNYSLSEEDVIQLVFRKYGVKITSEQIVRAYAPEQKMSWKKSVEVARFIKGMTLRQAKSWLEDVVKMKRPIPIKTFKKKQAHHAVPWSGWPVAKWPVKVAKRFLDLLENLENNAKFRGLDVERVVIVHAAAHKGYRIPNIMPRAFGRATRFDEQTVNVEVIAAELPKEVVPKRYKLNLVKR</sequence>